<protein>
    <recommendedName>
        <fullName evidence="20">UDP-glucuronosyltransferase 1A9</fullName>
        <shortName evidence="22">UGT1A9</shortName>
        <ecNumber evidence="3 5 6 11 12 14">2.4.1.17</ecNumber>
    </recommendedName>
    <alternativeName>
        <fullName>UDP-glucuronosyltransferase 1-9</fullName>
        <shortName>UDPGT 1-9</shortName>
        <shortName>UGT1*9</shortName>
        <shortName>UGT1-09</shortName>
        <shortName>UGT1.9</shortName>
    </alternativeName>
    <alternativeName>
        <fullName>UDP-glucuronosyltransferase 1-I</fullName>
        <shortName>UGT-1I</shortName>
        <shortName>UGT1I</shortName>
    </alternativeName>
    <alternativeName>
        <fullName>lugP4</fullName>
    </alternativeName>
</protein>
<organism>
    <name type="scientific">Homo sapiens</name>
    <name type="common">Human</name>
    <dbReference type="NCBI Taxonomy" id="9606"/>
    <lineage>
        <taxon>Eukaryota</taxon>
        <taxon>Metazoa</taxon>
        <taxon>Chordata</taxon>
        <taxon>Craniata</taxon>
        <taxon>Vertebrata</taxon>
        <taxon>Euteleostomi</taxon>
        <taxon>Mammalia</taxon>
        <taxon>Eutheria</taxon>
        <taxon>Euarchontoglires</taxon>
        <taxon>Primates</taxon>
        <taxon>Haplorrhini</taxon>
        <taxon>Catarrhini</taxon>
        <taxon>Hominidae</taxon>
        <taxon>Homo</taxon>
    </lineage>
</organism>
<reference key="1">
    <citation type="journal article" date="1991" name="Biochem. J.">
        <title>Cloning and stable expression of a new member of the human liver phenol/bilirubin: UDP-glucuronosyltransferase cDNA family.</title>
        <authorList>
            <person name="Wooster R."/>
            <person name="Sutherland L."/>
            <person name="Ebner T."/>
            <person name="Clarke D."/>
            <person name="da Cruz e Silva O."/>
            <person name="Burchell B."/>
        </authorList>
    </citation>
    <scope>NUCLEOTIDE SEQUENCE [MRNA]</scope>
    <source>
        <tissue>Liver</tissue>
    </source>
</reference>
<reference key="2">
    <citation type="submission" date="1998-03" db="EMBL/GenBank/DDBJ databases">
        <title>Human phenol metabolizing UDP-glucuronosyltransferase.</title>
        <authorList>
            <person name="Ciotti M."/>
            <person name="Potter C."/>
            <person name="Owens I.S."/>
        </authorList>
    </citation>
    <scope>NUCLEOTIDE SEQUENCE [MRNA]</scope>
    <source>
        <tissue>Liver</tissue>
    </source>
</reference>
<reference key="3">
    <citation type="journal article" date="2001" name="Pharmacogenetics">
        <title>Thirteen UDP-glucuronosyltransferase genes are encoded at the human UGT1 gene complex locus.</title>
        <authorList>
            <person name="Gong Q.H."/>
            <person name="Cho J.W."/>
            <person name="Huang T."/>
            <person name="Potter C."/>
            <person name="Gholami N."/>
            <person name="Basu N.K."/>
            <person name="Kubota S."/>
            <person name="Carvalho S."/>
            <person name="Pennington M.W."/>
            <person name="Owens I.S."/>
            <person name="Popescu N.C."/>
        </authorList>
    </citation>
    <scope>NUCLEOTIDE SEQUENCE [GENOMIC DNA]</scope>
</reference>
<reference key="4">
    <citation type="journal article" date="2005" name="Nature">
        <title>Generation and annotation of the DNA sequences of human chromosomes 2 and 4.</title>
        <authorList>
            <person name="Hillier L.W."/>
            <person name="Graves T.A."/>
            <person name="Fulton R.S."/>
            <person name="Fulton L.A."/>
            <person name="Pepin K.H."/>
            <person name="Minx P."/>
            <person name="Wagner-McPherson C."/>
            <person name="Layman D."/>
            <person name="Wylie K."/>
            <person name="Sekhon M."/>
            <person name="Becker M.C."/>
            <person name="Fewell G.A."/>
            <person name="Delehaunty K.D."/>
            <person name="Miner T.L."/>
            <person name="Nash W.E."/>
            <person name="Kremitzki C."/>
            <person name="Oddy L."/>
            <person name="Du H."/>
            <person name="Sun H."/>
            <person name="Bradshaw-Cordum H."/>
            <person name="Ali J."/>
            <person name="Carter J."/>
            <person name="Cordes M."/>
            <person name="Harris A."/>
            <person name="Isak A."/>
            <person name="van Brunt A."/>
            <person name="Nguyen C."/>
            <person name="Du F."/>
            <person name="Courtney L."/>
            <person name="Kalicki J."/>
            <person name="Ozersky P."/>
            <person name="Abbott S."/>
            <person name="Armstrong J."/>
            <person name="Belter E.A."/>
            <person name="Caruso L."/>
            <person name="Cedroni M."/>
            <person name="Cotton M."/>
            <person name="Davidson T."/>
            <person name="Desai A."/>
            <person name="Elliott G."/>
            <person name="Erb T."/>
            <person name="Fronick C."/>
            <person name="Gaige T."/>
            <person name="Haakenson W."/>
            <person name="Haglund K."/>
            <person name="Holmes A."/>
            <person name="Harkins R."/>
            <person name="Kim K."/>
            <person name="Kruchowski S.S."/>
            <person name="Strong C.M."/>
            <person name="Grewal N."/>
            <person name="Goyea E."/>
            <person name="Hou S."/>
            <person name="Levy A."/>
            <person name="Martinka S."/>
            <person name="Mead K."/>
            <person name="McLellan M.D."/>
            <person name="Meyer R."/>
            <person name="Randall-Maher J."/>
            <person name="Tomlinson C."/>
            <person name="Dauphin-Kohlberg S."/>
            <person name="Kozlowicz-Reilly A."/>
            <person name="Shah N."/>
            <person name="Swearengen-Shahid S."/>
            <person name="Snider J."/>
            <person name="Strong J.T."/>
            <person name="Thompson J."/>
            <person name="Yoakum M."/>
            <person name="Leonard S."/>
            <person name="Pearman C."/>
            <person name="Trani L."/>
            <person name="Radionenko M."/>
            <person name="Waligorski J.E."/>
            <person name="Wang C."/>
            <person name="Rock S.M."/>
            <person name="Tin-Wollam A.-M."/>
            <person name="Maupin R."/>
            <person name="Latreille P."/>
            <person name="Wendl M.C."/>
            <person name="Yang S.-P."/>
            <person name="Pohl C."/>
            <person name="Wallis J.W."/>
            <person name="Spieth J."/>
            <person name="Bieri T.A."/>
            <person name="Berkowicz N."/>
            <person name="Nelson J.O."/>
            <person name="Osborne J."/>
            <person name="Ding L."/>
            <person name="Meyer R."/>
            <person name="Sabo A."/>
            <person name="Shotland Y."/>
            <person name="Sinha P."/>
            <person name="Wohldmann P.E."/>
            <person name="Cook L.L."/>
            <person name="Hickenbotham M.T."/>
            <person name="Eldred J."/>
            <person name="Williams D."/>
            <person name="Jones T.A."/>
            <person name="She X."/>
            <person name="Ciccarelli F.D."/>
            <person name="Izaurralde E."/>
            <person name="Taylor J."/>
            <person name="Schmutz J."/>
            <person name="Myers R.M."/>
            <person name="Cox D.R."/>
            <person name="Huang X."/>
            <person name="McPherson J.D."/>
            <person name="Mardis E.R."/>
            <person name="Clifton S.W."/>
            <person name="Warren W.C."/>
            <person name="Chinwalla A.T."/>
            <person name="Eddy S.R."/>
            <person name="Marra M.A."/>
            <person name="Ovcharenko I."/>
            <person name="Furey T.S."/>
            <person name="Miller W."/>
            <person name="Eichler E.E."/>
            <person name="Bork P."/>
            <person name="Suyama M."/>
            <person name="Torrents D."/>
            <person name="Waterston R.H."/>
            <person name="Wilson R.K."/>
        </authorList>
    </citation>
    <scope>NUCLEOTIDE SEQUENCE [LARGE SCALE GENOMIC DNA]</scope>
</reference>
<reference key="5">
    <citation type="journal article" date="2004" name="Genome Res.">
        <title>The status, quality, and expansion of the NIH full-length cDNA project: the Mammalian Gene Collection (MGC).</title>
        <authorList>
            <consortium name="The MGC Project Team"/>
        </authorList>
    </citation>
    <scope>NUCLEOTIDE SEQUENCE [LARGE SCALE MRNA]</scope>
    <source>
        <tissue>Kidney</tissue>
    </source>
</reference>
<reference key="6">
    <citation type="submission" date="2000-08" db="EMBL/GenBank/DDBJ databases">
        <title>Human phenol UDP-glucuronosyltransferase (UGT1A9) gene isozyme exon 1.</title>
        <authorList>
            <person name="Owens I.S."/>
            <person name="Gong Q."/>
            <person name="Cho J.W."/>
            <person name="Potter C."/>
            <person name="Gholami N."/>
        </authorList>
    </citation>
    <scope>NUCLEOTIDE SEQUENCE [GENOMIC DNA] OF 1-285</scope>
</reference>
<reference key="7">
    <citation type="submission" date="2006-01" db="EMBL/GenBank/DDBJ databases">
        <authorList>
            <person name="Guillemette C."/>
            <person name="Levesque E."/>
            <person name="Girard H."/>
            <person name="Bernard O."/>
        </authorList>
    </citation>
    <scope>PARTIAL NUCLEOTIDE SEQUENCE [MRNA]</scope>
</reference>
<reference key="8">
    <citation type="journal article" date="2002" name="Mol. Pharmacol.">
        <title>Common human UGT1A polymorphisms and the altered metabolism of irinotecan active metabolite 7-ethyl-10-hydroxycamptothecin (SN-38).</title>
        <authorList>
            <person name="Gagne J.F."/>
            <person name="Montminy V."/>
            <person name="Belanger P."/>
            <person name="Journault K."/>
            <person name="Gaucher G."/>
            <person name="Guillemette C."/>
        </authorList>
    </citation>
    <scope>FUNCTION (ISOFORM 1)</scope>
    <scope>CATALYTIC ACTIVITY</scope>
    <scope>BIOPHYSICOCHEMICAL PROPERTIES</scope>
    <scope>SUBSTRATE SPECIFICITY</scope>
</reference>
<reference key="9">
    <citation type="journal article" date="2004" name="J. Clin. Endocrinol. Metab.">
        <title>Specificity and regioselectivity of the conjugation of estradiol, estrone, and their catecholestrogen and methoxyestrogen metabolites by human uridine diphospho-glucuronosyltransferases expressed in endometrium.</title>
        <authorList>
            <person name="Lepine J."/>
            <person name="Bernard O."/>
            <person name="Plante M."/>
            <person name="Tetu B."/>
            <person name="Pelletier G."/>
            <person name="Labrie F."/>
            <person name="Belanger A."/>
            <person name="Guillemette C."/>
        </authorList>
    </citation>
    <scope>FUNCTION (ISOFORM 1)</scope>
    <scope>CATALYTIC ACTIVITY</scope>
    <scope>BIOPHYSICOCHEMICAL PROPERTIES</scope>
</reference>
<reference key="10">
    <citation type="journal article" date="2004" name="J. Lipid Res.">
        <title>Glucuronidation of oxidized fatty acids and prostaglandins B1 and E2 by human hepatic and recombinant UDP-glucuronosyltransferases.</title>
        <authorList>
            <person name="Little J.M."/>
            <person name="Kurkela M."/>
            <person name="Sonka J."/>
            <person name="Jaentti S."/>
            <person name="Ketola R."/>
            <person name="Bratton S."/>
            <person name="Finel M."/>
            <person name="Radominska-Pandya A."/>
        </authorList>
    </citation>
    <scope>FUNCTION</scope>
    <scope>CATALYTIC ACTIVITY</scope>
    <scope>BIOPHYSICOCHEMICAL PROPERTIES</scope>
</reference>
<reference key="11">
    <citation type="journal article" date="2005" name="Drug Metab. Dispos.">
        <title>Identification of the UDP-glucuronosyltransferase isoforms involved in mycophenolic acid phase II metabolism.</title>
        <authorList>
            <person name="Picard N."/>
            <person name="Ratanasavanh D."/>
            <person name="Premaud A."/>
            <person name="Le Meur Y."/>
            <person name="Marquet P."/>
        </authorList>
    </citation>
    <scope>FUNCTION (ISOFORM 1)</scope>
    <scope>CATALYTIC ACTIVITY</scope>
    <scope>BIOPHYSICOCHEMICAL PROPERTIES</scope>
    <scope>SUBSTRATE SPECIFICITY</scope>
</reference>
<reference key="12">
    <citation type="journal article" date="2006" name="Drug Metab. Dispos.">
        <title>Human UDP-glucuronosyltransferase, UGT1A8, glucuronidates dihydrotestosterone to a monoglucuronide and further to a structurally novel diglucuronide.</title>
        <authorList>
            <person name="Murai T."/>
            <person name="Samata N."/>
            <person name="Iwabuchi H."/>
            <person name="Ikeda T."/>
        </authorList>
    </citation>
    <scope>BIOPHYSICOCHEMICAL PROPERTIES</scope>
</reference>
<reference key="13">
    <citation type="journal article" date="2007" name="J. Biol. Chem.">
        <title>Oligomerization of the UDP-glucuronosyltransferase 1A proteins: homo- and heterodimerization analysis by fluorescence resonance energy transfer and co-immunoprecipitation.</title>
        <authorList>
            <person name="Operana T.N."/>
            <person name="Tukey R.H."/>
        </authorList>
    </citation>
    <scope>SUBUNIT</scope>
    <scope>SUBCELLULAR LOCATION</scope>
</reference>
<reference key="14">
    <citation type="journal article" date="2007" name="Mol. Pharm.">
        <title>Disposition of flavonoids via enteric recycling: enzyme stability affects characterization of prunetin glucuronidation across species, organs, and UGT isoforms.</title>
        <authorList>
            <person name="Joseph T.B."/>
            <person name="Wang S.W."/>
            <person name="Liu X."/>
            <person name="Kulkarni K.H."/>
            <person name="Wang J."/>
            <person name="Xu H."/>
            <person name="Hu M."/>
        </authorList>
    </citation>
    <scope>FUNCTION (ISOFORM 1)</scope>
    <scope>CATALYTIC ACTIVITY</scope>
    <scope>BIOPHYSICOCHEMICAL PROPERTIES</scope>
</reference>
<reference key="15">
    <citation type="journal article" date="2007" name="Pharmacogenet. Genomics">
        <title>Genetic diversity at the UGT1 locus is amplified by a novel 3' alternative splicing mechanism leading to nine additional UGT1A proteins that act as regulators of glucuronidation activity.</title>
        <authorList>
            <person name="Girard H."/>
            <person name="Levesque E."/>
            <person name="Bellemare J."/>
            <person name="Journault K."/>
            <person name="Caillier B."/>
            <person name="Guillemette C."/>
        </authorList>
    </citation>
    <scope>FUNCTION (ISOFORM 2)</scope>
    <scope>CATALYTIC ACTIVITY</scope>
    <scope>ALTERNATIVE SPLICING</scope>
    <scope>TISSUE SPECIFICITY</scope>
</reference>
<reference key="16">
    <citation type="journal article" date="2008" name="Biochem. Pharmacol.">
        <title>The human UDP-glucuronosyltransferase UGT1A3 is highly selective towards N2 in the tetrazole ring of losartan, candesartan, and zolarsartan.</title>
        <authorList>
            <person name="Alonen A."/>
            <person name="Finel M."/>
            <person name="Kostiainen R."/>
        </authorList>
    </citation>
    <scope>FUNCTION (ISOFORM 1)</scope>
    <scope>CATALYTIC ACTIVITY</scope>
</reference>
<reference key="17">
    <citation type="journal article" date="2009" name="Mol. Pharm.">
        <title>Structure and concentration changes affect characterization of UGT isoform-specific metabolism of isoflavones.</title>
        <authorList>
            <person name="Tang L."/>
            <person name="Singh R."/>
            <person name="Liu Z."/>
            <person name="Hu M."/>
        </authorList>
    </citation>
    <scope>FUNCTION (ISOFORM 1)</scope>
    <scope>CATALYTIC ACTIVITY</scope>
    <scope>BIOPHYSICOCHEMICAL PROPERTIES</scope>
</reference>
<reference key="18">
    <citation type="journal article" date="2010" name="Drug Metab. Dispos.">
        <title>Alternatively spliced products of the UGT1A gene interact with the enzymatically active proteins to inhibit glucuronosyltransferase activity in vitro.</title>
        <authorList>
            <person name="Bellemare J."/>
            <person name="Rouleau M."/>
            <person name="Girard H."/>
            <person name="Harvey M."/>
            <person name="Guillemette C."/>
        </authorList>
    </citation>
    <scope>FUNCTION (ISOFORMS 1 AND 2)</scope>
    <scope>CATALYTIC ACTIVITY</scope>
    <scope>SUBUNIT</scope>
</reference>
<reference key="19">
    <citation type="journal article" date="2010" name="Biochem. Pharmacol.">
        <title>N-Glycosylation plays a role in protein folding of human UGT1A9.</title>
        <authorList>
            <person name="Nakajima M."/>
            <person name="Koga T."/>
            <person name="Sakai H."/>
            <person name="Yamanaka H."/>
            <person name="Fujiwara R."/>
            <person name="Yokoi T."/>
        </authorList>
    </citation>
    <scope>GLYCOSYLATION AT ASN-71; ASN-292 AND ASN-344</scope>
</reference>
<reference key="20">
    <citation type="journal article" date="2011" name="Drug Metab. Pharmacokinet.">
        <title>Identification of the human UDP-glucuronosyltransferase isoforms involved in the glucuronidation of the phytochemical ferulic acid.</title>
        <authorList>
            <person name="Li X."/>
            <person name="Shang L."/>
            <person name="Wu Y."/>
            <person name="Abbas S."/>
            <person name="Li D."/>
            <person name="Netter P."/>
            <person name="Ouzzine M."/>
            <person name="Wang H."/>
            <person name="Magdalou J."/>
        </authorList>
    </citation>
    <scope>FUNCTION</scope>
    <scope>CATALYTIC ACTIVITY</scope>
    <scope>BIOPHYSICOCHEMICAL PROPERTIES</scope>
</reference>
<reference key="21">
    <citation type="journal article" date="2013" name="Drug Metab. Dispos.">
        <title>Regiospecificity and stereospecificity of human UDP-glucuronosyltransferases in the glucuronidation of estriol, 16-epiestriol, 17-epiestriol, and 13-epiestradiol.</title>
        <authorList>
            <person name="Sneitz N."/>
            <person name="Vahermo M."/>
            <person name="Mosorin J."/>
            <person name="Laakkonen L."/>
            <person name="Poirier D."/>
            <person name="Finel M."/>
        </authorList>
    </citation>
    <scope>BIOPHYSICOCHEMICAL PROPERTIES</scope>
</reference>
<reference key="22">
    <citation type="journal article" date="2024" name="Redox Biol.">
        <title>Identification of novel F2-isoprostane metabolites by specific UDP-glucuronosyltransferases.</title>
        <authorList>
            <person name="Milne G.L."/>
            <person name="Nogueira M.S."/>
            <person name="Gao B."/>
            <person name="Sanchez S.C."/>
            <person name="Amin W."/>
            <person name="Thomas S."/>
            <person name="Oger C."/>
            <person name="Galano J.M."/>
            <person name="Murff H.J."/>
            <person name="Yang G."/>
            <person name="Durand T."/>
        </authorList>
    </citation>
    <scope>FUNCTION</scope>
    <scope>CATALYTIC ACTIVITY</scope>
</reference>
<reference key="23">
    <citation type="journal article" date="2014" name="J. Proteomics">
        <title>An enzyme assisted RP-RPLC approach for in-depth analysis of human liver phosphoproteome.</title>
        <authorList>
            <person name="Bian Y."/>
            <person name="Song C."/>
            <person name="Cheng K."/>
            <person name="Dong M."/>
            <person name="Wang F."/>
            <person name="Huang J."/>
            <person name="Sun D."/>
            <person name="Wang L."/>
            <person name="Ye M."/>
            <person name="Zou H."/>
        </authorList>
    </citation>
    <scope>IDENTIFICATION BY MASS SPECTROMETRY [LARGE SCALE ANALYSIS]</scope>
    <source>
        <tissue>Liver</tissue>
    </source>
</reference>
<reference key="24">
    <citation type="journal article" date="2006" name="Science">
        <title>The consensus coding sequences of human breast and colorectal cancers.</title>
        <authorList>
            <person name="Sjoeblom T."/>
            <person name="Jones S."/>
            <person name="Wood L.D."/>
            <person name="Parsons D.W."/>
            <person name="Lin J."/>
            <person name="Barber T.D."/>
            <person name="Mandelker D."/>
            <person name="Leary R.J."/>
            <person name="Ptak J."/>
            <person name="Silliman N."/>
            <person name="Szabo S."/>
            <person name="Buckhaults P."/>
            <person name="Farrell C."/>
            <person name="Meeh P."/>
            <person name="Markowitz S.D."/>
            <person name="Willis J."/>
            <person name="Dawson D."/>
            <person name="Willson J.K.V."/>
            <person name="Gazdar A.F."/>
            <person name="Hartigan J."/>
            <person name="Wu L."/>
            <person name="Liu C."/>
            <person name="Parmigiani G."/>
            <person name="Park B.H."/>
            <person name="Bachman K.E."/>
            <person name="Papadopoulos N."/>
            <person name="Vogelstein B."/>
            <person name="Kinzler K.W."/>
            <person name="Velculescu V.E."/>
        </authorList>
    </citation>
    <scope>VARIANT [LARGE SCALE ANALYSIS] ILE-442</scope>
</reference>
<reference key="25">
    <citation type="journal article" date="2009" name="Hum. Mutat.">
        <title>Analysis of inherited genetic variations at the UGT1 locus in the French-Canadian population.</title>
        <authorList>
            <person name="Menard V."/>
            <person name="Girard H."/>
            <person name="Harvey M."/>
            <person name="Perusse L."/>
            <person name="Guillemette C."/>
        </authorList>
    </citation>
    <scope>VARIANT THR-33</scope>
</reference>
<comment type="function">
    <molecule>Isoform 1</molecule>
    <text evidence="3 4 5 6 10 11 12 14 16 17 19">UDP-glucuronosyltransferase (UGT) that catalyzes phase II biotransformation reactions in which lipophilic substrates are conjugated with glucuronic acid to increase the metabolite's water solubility, thereby facilitating excretion into either the urine or bile (PubMed:12181437, PubMed:15470161, PubMed:15472229, PubMed:18004212, PubMed:18052087, PubMed:18674515, PubMed:19545173, PubMed:15231852, PubMed:21422672, PubMed:38211441). Essential for the elimination and detoxification of drugs, xenobiotics and endogenous compounds (PubMed:12181437, PubMed:18004212). Catalyzes the glucuronidation of endogenous estrogen hormones such as estradiol and estrone (PubMed:15472229). Involved in the glucuronidation of arachidonic acid (AA) and AA-derived eicosanoids including 15-HETE, PGB1 and F2-isoprostanes (8-iso-PGF2alpha and 5-epi-5-F2t-IsoP) (PubMed:15231852, PubMed:38211441). Glucuronates the phytochemical ferulic acid efficently at both the phenolic or the carboxylic acid group (PubMed:21422672). Also catalyzes the glucuronidation of the isoflavones genistein, daidzein, glycitein, formononetin, biochanin A and prunetin, which are phytoestrogens with anticancer and cardiovascular properties (PubMed:18052087, PubMed:19545173). Involved in the glucuronidation of the AGTR1 angiotensin receptor antagonist caderastan, a drug which can inhibit the effect of angiotensin II (PubMed:18674515). Involved in the biotransformation of 7-ethyl-10-hydroxycamptothecin (SN-38), the pharmacologically active metabolite of the anticancer drug irinotecan (PubMed:12181437, PubMed:20610558). Also metabolizes mycophenolate, an immunosuppressive agent (PubMed:15470161, PubMed:18004212).</text>
</comment>
<comment type="function">
    <molecule>Isoform 2</molecule>
    <text evidence="10 16">Lacks UGT glucuronidation activity but acts as a negative regulator of isoform 1.</text>
</comment>
<comment type="catalytic activity">
    <reaction evidence="3 4 5 6 10 11 12 14 17 19">
        <text>glucuronate acceptor + UDP-alpha-D-glucuronate = acceptor beta-D-glucuronoside + UDP + H(+)</text>
        <dbReference type="Rhea" id="RHEA:21032"/>
        <dbReference type="ChEBI" id="CHEBI:15378"/>
        <dbReference type="ChEBI" id="CHEBI:58052"/>
        <dbReference type="ChEBI" id="CHEBI:58223"/>
        <dbReference type="ChEBI" id="CHEBI:132367"/>
        <dbReference type="ChEBI" id="CHEBI:132368"/>
        <dbReference type="EC" id="2.4.1.17"/>
    </reaction>
    <physiologicalReaction direction="left-to-right" evidence="24 25 26 27 30 31 32 33 35 36">
        <dbReference type="Rhea" id="RHEA:21033"/>
    </physiologicalReaction>
</comment>
<comment type="catalytic activity">
    <reaction evidence="6">
        <text>2-hydroxy-17beta-estradiol + UDP-alpha-D-glucuronate = 2-hydroxy-17beta-estradiol 3-O-(beta-D-glucuronate) + UDP + H(+)</text>
        <dbReference type="Rhea" id="RHEA:53004"/>
        <dbReference type="ChEBI" id="CHEBI:15378"/>
        <dbReference type="ChEBI" id="CHEBI:28744"/>
        <dbReference type="ChEBI" id="CHEBI:58052"/>
        <dbReference type="ChEBI" id="CHEBI:58223"/>
        <dbReference type="ChEBI" id="CHEBI:136931"/>
    </reaction>
    <physiologicalReaction direction="left-to-right" evidence="27">
        <dbReference type="Rhea" id="RHEA:53005"/>
    </physiologicalReaction>
</comment>
<comment type="catalytic activity">
    <reaction evidence="6">
        <text>4-hydroxy-17beta-estradiol + UDP-alpha-D-glucuronate = 17beta-estradiol 4-O-(beta-D-glucuronate) + UDP + H(+)</text>
        <dbReference type="Rhea" id="RHEA:53040"/>
        <dbReference type="ChEBI" id="CHEBI:15378"/>
        <dbReference type="ChEBI" id="CHEBI:58052"/>
        <dbReference type="ChEBI" id="CHEBI:58223"/>
        <dbReference type="ChEBI" id="CHEBI:62845"/>
        <dbReference type="ChEBI" id="CHEBI:136937"/>
    </reaction>
    <physiologicalReaction direction="left-to-right" evidence="27">
        <dbReference type="Rhea" id="RHEA:53041"/>
    </physiologicalReaction>
</comment>
<comment type="catalytic activity">
    <reaction evidence="6">
        <text>2-hydroxyestrone + UDP-alpha-D-glucuronate = 2-hydroxyestrone 3-O-(beta-D-glucuronate) + UDP + H(+)</text>
        <dbReference type="Rhea" id="RHEA:53048"/>
        <dbReference type="ChEBI" id="CHEBI:1156"/>
        <dbReference type="ChEBI" id="CHEBI:15378"/>
        <dbReference type="ChEBI" id="CHEBI:58052"/>
        <dbReference type="ChEBI" id="CHEBI:58223"/>
        <dbReference type="ChEBI" id="CHEBI:136967"/>
    </reaction>
    <physiologicalReaction direction="left-to-right" evidence="27">
        <dbReference type="Rhea" id="RHEA:53049"/>
    </physiologicalReaction>
</comment>
<comment type="catalytic activity">
    <reaction evidence="6">
        <text>4-hydroxyestrone + UDP-alpha-D-glucuronate = estrone 4-O-(beta-D-glucuronate) + UDP + H(+)</text>
        <dbReference type="Rhea" id="RHEA:53060"/>
        <dbReference type="ChEBI" id="CHEBI:15378"/>
        <dbReference type="ChEBI" id="CHEBI:58052"/>
        <dbReference type="ChEBI" id="CHEBI:58223"/>
        <dbReference type="ChEBI" id="CHEBI:87602"/>
        <dbReference type="ChEBI" id="CHEBI:136970"/>
    </reaction>
    <physiologicalReaction direction="left-to-right" evidence="27">
        <dbReference type="Rhea" id="RHEA:53061"/>
    </physiologicalReaction>
</comment>
<comment type="catalytic activity">
    <reaction evidence="11">
        <text>prunetin + UDP-alpha-D-glucuronate = prunetin-5-O-beta-D-glucuronide + UDP</text>
        <dbReference type="Rhea" id="RHEA:63612"/>
        <dbReference type="ChEBI" id="CHEBI:58052"/>
        <dbReference type="ChEBI" id="CHEBI:58223"/>
        <dbReference type="ChEBI" id="CHEBI:147403"/>
        <dbReference type="ChEBI" id="CHEBI:147405"/>
    </reaction>
    <physiologicalReaction direction="left-to-right" evidence="31">
        <dbReference type="Rhea" id="RHEA:63613"/>
    </physiologicalReaction>
</comment>
<comment type="catalytic activity">
    <reaction evidence="19">
        <text>8-iso-prostaglandin F2alpha + UDP-alpha-D-glucuronate = 8-iso-prostaglandin F2alpha-glucuronide + UDP + H(+)</text>
        <dbReference type="Rhea" id="RHEA:79907"/>
        <dbReference type="ChEBI" id="CHEBI:15378"/>
        <dbReference type="ChEBI" id="CHEBI:58052"/>
        <dbReference type="ChEBI" id="CHEBI:58223"/>
        <dbReference type="ChEBI" id="CHEBI:77768"/>
        <dbReference type="ChEBI" id="CHEBI:229786"/>
    </reaction>
    <physiologicalReaction direction="left-to-right" evidence="36">
        <dbReference type="Rhea" id="RHEA:79908"/>
    </physiologicalReaction>
</comment>
<comment type="catalytic activity">
    <reaction evidence="19">
        <text>5-epi-5-F2t-IsoP + UDP-alpha-D-glucuronate = 5-epi-5-F2t-IsoP-glucuronide + UDP + H(+)</text>
        <dbReference type="Rhea" id="RHEA:79911"/>
        <dbReference type="ChEBI" id="CHEBI:15378"/>
        <dbReference type="ChEBI" id="CHEBI:58052"/>
        <dbReference type="ChEBI" id="CHEBI:58223"/>
        <dbReference type="ChEBI" id="CHEBI:229787"/>
        <dbReference type="ChEBI" id="CHEBI:229788"/>
    </reaction>
    <physiologicalReaction direction="left-to-right" evidence="36">
        <dbReference type="Rhea" id="RHEA:79912"/>
    </physiologicalReaction>
</comment>
<comment type="catalytic activity">
    <reaction evidence="4">
        <text>(5Z,8Z,11Z,14Z)-eicosatetraenoate + UDP-alpha-D-glucuronate = O-[(5Z),(8Z),(11Z),(14Z)-eicosatetraenoyl]-beta-D-glucuronate + UDP</text>
        <dbReference type="Rhea" id="RHEA:79915"/>
        <dbReference type="ChEBI" id="CHEBI:32395"/>
        <dbReference type="ChEBI" id="CHEBI:58052"/>
        <dbReference type="ChEBI" id="CHEBI:58223"/>
        <dbReference type="ChEBI" id="CHEBI:231327"/>
    </reaction>
    <physiologicalReaction direction="left-to-right" evidence="25">
        <dbReference type="Rhea" id="RHEA:79916"/>
    </physiologicalReaction>
</comment>
<comment type="catalytic activity">
    <reaction evidence="4">
        <text>15-hydroxy-(5Z,8Z,11Z,13E)-eicosatetraenoate + UDP-alpha-D-glucuronate = 15-O-(beta-D-glucuronosyl)-(5Z,8Z,11Z,14Z)-eicosatetraenoate + UDP + H(+)</text>
        <dbReference type="Rhea" id="RHEA:79919"/>
        <dbReference type="ChEBI" id="CHEBI:15378"/>
        <dbReference type="ChEBI" id="CHEBI:58052"/>
        <dbReference type="ChEBI" id="CHEBI:58223"/>
        <dbReference type="ChEBI" id="CHEBI:78832"/>
        <dbReference type="ChEBI" id="CHEBI:231329"/>
    </reaction>
    <physiologicalReaction direction="left-to-right" evidence="25">
        <dbReference type="Rhea" id="RHEA:79920"/>
    </physiologicalReaction>
</comment>
<comment type="catalytic activity">
    <reaction evidence="4">
        <text>prostaglandin B1 + UDP-alpha-D-glucuronate = 15-O-(beta-D-glucuronosyl)-prostaglandin B1 + UDP + H(+)</text>
        <dbReference type="Rhea" id="RHEA:79935"/>
        <dbReference type="ChEBI" id="CHEBI:15378"/>
        <dbReference type="ChEBI" id="CHEBI:58052"/>
        <dbReference type="ChEBI" id="CHEBI:58223"/>
        <dbReference type="ChEBI" id="CHEBI:133393"/>
        <dbReference type="ChEBI" id="CHEBI:231330"/>
    </reaction>
    <physiologicalReaction direction="left-to-right" evidence="25">
        <dbReference type="Rhea" id="RHEA:79936"/>
    </physiologicalReaction>
</comment>
<comment type="catalytic activity">
    <reaction evidence="17">
        <text>(E)-ferulate + UDP-alpha-D-glucuronate = (E)-4-O-(beta-D-glucuronosyl)-ferulate + UDP + H(+)</text>
        <dbReference type="Rhea" id="RHEA:79951"/>
        <dbReference type="ChEBI" id="CHEBI:15378"/>
        <dbReference type="ChEBI" id="CHEBI:29749"/>
        <dbReference type="ChEBI" id="CHEBI:58052"/>
        <dbReference type="ChEBI" id="CHEBI:58223"/>
        <dbReference type="ChEBI" id="CHEBI:231331"/>
    </reaction>
    <physiologicalReaction direction="left-to-right" evidence="35">
        <dbReference type="Rhea" id="RHEA:79952"/>
    </physiologicalReaction>
</comment>
<comment type="catalytic activity">
    <reaction evidence="17">
        <text>(E)-ferulate + UDP-alpha-D-glucuronate = (E)-ferulic acid beta-D-glucuronate ester + UDP</text>
        <dbReference type="Rhea" id="RHEA:79955"/>
        <dbReference type="ChEBI" id="CHEBI:29749"/>
        <dbReference type="ChEBI" id="CHEBI:58052"/>
        <dbReference type="ChEBI" id="CHEBI:58223"/>
        <dbReference type="ChEBI" id="CHEBI:231332"/>
    </reaction>
    <physiologicalReaction direction="left-to-right" evidence="35">
        <dbReference type="Rhea" id="RHEA:79956"/>
    </physiologicalReaction>
</comment>
<comment type="catalytic activity">
    <reaction evidence="12">
        <text>candesartan + UDP-alpha-D-glucuronate = candesartan O-beta-D-glucuronoside + UDP</text>
        <dbReference type="Rhea" id="RHEA:63724"/>
        <dbReference type="ChEBI" id="CHEBI:58052"/>
        <dbReference type="ChEBI" id="CHEBI:58223"/>
        <dbReference type="ChEBI" id="CHEBI:149509"/>
        <dbReference type="ChEBI" id="CHEBI:149522"/>
    </reaction>
    <physiologicalReaction direction="left-to-right" evidence="32">
        <dbReference type="Rhea" id="RHEA:63725"/>
    </physiologicalReaction>
</comment>
<comment type="catalytic activity">
    <reaction evidence="3">
        <text>SN-38 + UDP-alpha-D-glucuronate = SN-38 O-beta-D-glucuronide + UDP + H(+)</text>
        <dbReference type="Rhea" id="RHEA:63696"/>
        <dbReference type="ChEBI" id="CHEBI:8988"/>
        <dbReference type="ChEBI" id="CHEBI:15378"/>
        <dbReference type="ChEBI" id="CHEBI:58052"/>
        <dbReference type="ChEBI" id="CHEBI:58223"/>
        <dbReference type="ChEBI" id="CHEBI:149482"/>
    </reaction>
    <physiologicalReaction direction="left-to-right" evidence="24">
        <dbReference type="Rhea" id="RHEA:63697"/>
    </physiologicalReaction>
</comment>
<comment type="catalytic activity">
    <reaction evidence="5 10">
        <text>mycophenolate + UDP-alpha-D-glucuronate = mycophenolate 7-O-beta-D-glucuronide + UDP + H(+)</text>
        <dbReference type="Rhea" id="RHEA:63704"/>
        <dbReference type="ChEBI" id="CHEBI:15378"/>
        <dbReference type="ChEBI" id="CHEBI:58052"/>
        <dbReference type="ChEBI" id="CHEBI:58223"/>
        <dbReference type="ChEBI" id="CHEBI:62932"/>
        <dbReference type="ChEBI" id="CHEBI:149486"/>
    </reaction>
    <physiologicalReaction direction="left-to-right" evidence="26 30">
        <dbReference type="Rhea" id="RHEA:63705"/>
    </physiologicalReaction>
</comment>
<comment type="biophysicochemical properties">
    <kinetics>
        <KM evidence="6">4 uM for estrone (when assaying glucuronidation at position 3)</KM>
        <KM evidence="6">17 uM for 2-hydroxy-17beta-estradiol (when assaying glucuronidation at position 2)</KM>
        <KM evidence="6">24 uM for 2-hydroxy-17beta-estradiol (when assaying glucuronidation at position 3)</KM>
        <KM evidence="6">43 uM for 2-hydroxy-estrone (when assaying glucuronidation at position 2)</KM>
        <KM evidence="6">58 uM for 2-hydroxy-estrone (when assaying glucuronidation at position 3)</KM>
        <KM evidence="6">53 uM for 2-methoxy-17beta-estradiol (when assaying glucuronidation at position 3)</KM>
        <KM evidence="6">126 uM for 2-methoxy-estrone (when assaying glucuronidation at position 3)</KM>
        <KM evidence="6">55 uM for 4-hydroxy-17beta-estradiol (when assaying glucuronidation at position 3)</KM>
        <KM evidence="6">53 uM for 4-hydroxy-17beta-estradiol (when assaying glucuronidation at position 4)</KM>
        <KM evidence="6">241 uM for 4-hydroxy-estrone (when assaying glucuronidation at position 3)</KM>
        <KM evidence="6">142 uM for 4-hydroxy-estrone (when assaying glucuronidation at position 4)</KM>
        <KM evidence="14">2.09 uM for genistein</KM>
        <KM evidence="4">45.8 uM for (5Z,8Z,11Z,14Z)-eicosatetraenoate</KM>
        <KM evidence="4">70.1 uM for 15-hydroxy-(5Z,8Z,11Z,13E)-eicosatetraenoate</KM>
        <KM evidence="17">2500 uM for (E)-ferulate (when assaying glucuronidation at the phenolic group)</KM>
        <KM evidence="17">2470 uM for (E)-ferulate (when assaying glucuronidation at the carboxylic acid group)</KM>
        <KM evidence="3">0.7 uM for SN-38 (when assaying glucuronidation at position 10)</KM>
        <KM evidence="5">160 uM for mycophenolate (when assaying glucuronidation at position 7)</KM>
        <Vmax evidence="6">4.0 pmol/min/mg enzyme for the formation of estrone 3-O-(beta-D-glucuronate)</Vmax>
        <Vmax evidence="6">6.0 pmol/min/mg enzyme for the formation of 2-hydroxy-17beta-estradiol 2-O-(beta-D-glucuronate)</Vmax>
        <Vmax evidence="6">145.0 pmol/min/mg enzyme for the formation of 2-hydroxy-17beta-estradiol 3-O-(beta-D-glucuronate)</Vmax>
        <Vmax evidence="6">11.0 pmol/min/mg enzyme for the formation of 2-hydroxy-estrone 2-O-(beta-D-glucuronate)</Vmax>
        <Vmax evidence="6">118.0 pmol/min/mg enzyme for the formation of 2-hydroxy-estrone 3-O-(beta-D-glucuronate)</Vmax>
        <Vmax evidence="6">7.0 pmol/min/mg enzyme for the formation of 2-methoxy-17beta-estradiol 3-O-(beta-D-glucuronate)</Vmax>
        <Vmax evidence="6">41.0 pmol/min/mg enzyme for the formation of 2-methoxyestrone 3-O-(beta-D-glucuronate)</Vmax>
        <Vmax evidence="6">17.0 pmol/min/mg enzyme for the formation of 4-hydroxy-17beta-estradiol 3-O-(beta-D-glucuronate)</Vmax>
        <Vmax evidence="6">1673.0 pmol/min/mg enzyme for the formation of 4-hydroxy-17beta-estradiol 4-O-(beta-D-glucuronate)</Vmax>
        <Vmax evidence="6">63.0 pmol/min/mg enzyme for the formation of 4-hydroxy-estrone 3-O-(beta-D-glucuronate)</Vmax>
        <Vmax evidence="6">524.0 pmol/min/mg enzyme for the formation of 4-hydroxy-estrone 4-O-(beta-D-glucuronate)</Vmax>
        <Vmax evidence="18">5.3 pmol/min/mg enzyme for the formation of 17alpha-estradiol 3-O-(beta-D-glucuronate)</Vmax>
        <Vmax evidence="18">3.5 pmol/min/mg enzyme for the formation of 17alpha-estradiol 17-O-(beta-D-glucuronate)</Vmax>
        <Vmax evidence="14">1.29 nmol/min/mg enzyme for the formation of genistein glucuronide</Vmax>
        <Vmax evidence="11">0.25 nmol/min/mg enzyme for the formation of prunetin-5-O-(beta-D-glucuronoside)</Vmax>
        <Vmax evidence="7">0.012 pmol/min/mg enzyme with 5alpha-dihydrotestosterone 17-O-(beta-D-glucuronate) as substrate, for the formation of 5alpha-dihydrotestosterone 17-O-[beta-D-glucuronosyl-(1-&gt;2)-glucuronate]</Vmax>
        <Vmax evidence="4">1100.0 pmol/min/mg enzyme for the formation of O-[(5Z),(8Z),(11Z),(14Z)-eicosatetraenoyl]-beta-D-glucuronate</Vmax>
        <Vmax evidence="4">1000.0 pmol/min/mg enzyme for the formation of 15-O-(beta-D-glucuronosyl)-(5Z,8Z,11Z,14Z)-eicosatetraenoate</Vmax>
        <Vmax evidence="17">72.7 pmol/min/mg enzyme for the formation of (E)-4-O-(beta-D-glucuronosyl)-ferulate</Vmax>
        <Vmax evidence="17">229.4 pmol/min/mg enzyme for the formation of (E)-ferulic acid beta-D-glucuronate ester</Vmax>
        <Vmax evidence="3">2.4 pmol/min/mg enzyme for the formation of SN-38 glucuronide</Vmax>
        <Vmax evidence="5">11.82 nmol/min/mg enzyme for the formation of mycophenolate 7-O-glucuronide</Vmax>
        <text evidence="26 28 31">Some kinetic parameters were assessed using commercial enzymes, which may represent a mix of both active and inactive protein forms, and therefore modify the kinetic values.</text>
    </kinetics>
</comment>
<comment type="subunit">
    <text evidence="9 16 34">Homodimer (PubMed:17179145). Homooligomer (Probable). Interacts with UGT1A1, UGT1A3, UGT1A4, UGT1A6, UGT1A7, UGT1A8 and UGT1A10 to form heterodimers (PubMed:17179145). Isoform 1 interacts with isoform 2/i2 suggesting that oligomerization is involved in negative regulation of transferase activity by isoform 2. Isoform 1 also interacts with respective i2 isoforms of UGT1A1, UGT1A3, UGT1A4, UGT1A6, UGT1A7, UGT1A8 and UGT1A10 (PubMed:20610558).</text>
</comment>
<comment type="interaction">
    <interactant intactId="EBI-9486373">
        <id>O60656-1</id>
    </interactant>
    <interactant intactId="EBI-9490970">
        <id>P22309-2</id>
        <label>UGT1A1</label>
    </interactant>
    <organismsDiffer>false</organismsDiffer>
    <experiments>3</experiments>
</comment>
<comment type="interaction">
    <interactant intactId="EBI-9486373">
        <id>O60656-1</id>
    </interactant>
    <interactant intactId="EBI-9486373">
        <id>O60656-1</id>
        <label>UGT1A9</label>
    </interactant>
    <organismsDiffer>false</organismsDiffer>
    <experiments>11</experiments>
</comment>
<comment type="subcellular location">
    <subcellularLocation>
        <location evidence="29">Endoplasmic reticulum membrane</location>
        <topology evidence="2">Single-pass membrane protein</topology>
    </subcellularLocation>
</comment>
<comment type="alternative products">
    <event type="alternative splicing"/>
    <isoform>
        <id>O60656-1</id>
        <name>1</name>
        <name evidence="21">i1</name>
        <sequence type="displayed"/>
    </isoform>
    <isoform>
        <id>O60656-2</id>
        <name>2</name>
        <name evidence="21">i2</name>
        <name>UGT1A9s</name>
        <sequence type="described" ref="VSP_053965"/>
    </isoform>
</comment>
<comment type="tissue specificity">
    <molecule>Isoform 1</molecule>
    <text evidence="10">Expressed in liver, kidney, colon, esophagus and small intestine.</text>
</comment>
<comment type="tissue specificity">
    <molecule>Isoform 2</molecule>
    <text evidence="10">Expressed in liver, kidney, colon, esophagus and small intestine.</text>
</comment>
<comment type="miscellaneous">
    <text evidence="10">UGT1A9 isoform is part of the UGT1A complex locus which displays alternative use of promoters, first exons and terminal exons. The locus is defined by 13 first exons, which are alternatively spliced to 3 other common exons and 2 alternative terminal exons 5. From the 27 possible mRNA isoforms, 9 produce functionally active polypeptides (UGT1A1, 1A3, 1A4, 1A5, 1A6, 1A7, 1A8, 1A9 and 1A10) called isoforms 1 (i1). Use of an alternative exon 5 (5b) as terminal exon is leading to 9 additional alternatively spliced products termed isoforms i2 and which lack transferase activity.</text>
</comment>
<comment type="similarity">
    <text evidence="23">Belongs to the UDP-glycosyltransferase family.</text>
</comment>
<comment type="sequence caution" evidence="23">
    <conflict type="frameshift">
        <sequence resource="EMBL-CDS" id="AAB19791"/>
    </conflict>
</comment>
<feature type="signal peptide" evidence="2">
    <location>
        <begin position="1"/>
        <end position="25"/>
    </location>
</feature>
<feature type="chain" id="PRO_0000036008" description="UDP-glucuronosyltransferase 1A9">
    <location>
        <begin position="26"/>
        <end position="530"/>
    </location>
</feature>
<feature type="transmembrane region" description="Helical" evidence="2">
    <location>
        <begin position="488"/>
        <end position="504"/>
    </location>
</feature>
<feature type="modified residue" description="N6-succinyllysine" evidence="1">
    <location>
        <position position="99"/>
    </location>
</feature>
<feature type="glycosylation site" description="N-linked (GlcNAc...) asparagine" evidence="15">
    <location>
        <position position="71"/>
    </location>
</feature>
<feature type="glycosylation site" description="N-linked (GlcNAc...) asparagine" evidence="15">
    <location>
        <position position="292"/>
    </location>
</feature>
<feature type="glycosylation site" description="N-linked (GlcNAc...) asparagine" evidence="15">
    <location>
        <position position="344"/>
    </location>
</feature>
<feature type="splice variant" id="VSP_053965" description="In isoform 2." evidence="23">
    <original>SYKENIMRLSSLHKDRPVEPLDLAVFWVEFVMRHKGAPHLRPAAHDLTWYQYHSLDVIGFLLAVVLTVAFITFKCCAYGYRKCLGKKGRVKKAHKSKTH</original>
    <variation>RKKQQSGRQM</variation>
    <location>
        <begin position="432"/>
        <end position="530"/>
    </location>
</feature>
<feature type="sequence variant" id="VAR_058587" description="In dbSNP:rs72551330." evidence="13">
    <original>M</original>
    <variation>T</variation>
    <location>
        <position position="33"/>
    </location>
</feature>
<feature type="sequence variant" id="VAR_036035" description="In a breast cancer sample; somatic mutation." evidence="8">
    <original>S</original>
    <variation>I</variation>
    <location>
        <position position="442"/>
    </location>
</feature>
<feature type="sequence conflict" description="In Ref. 1; AAB19791." evidence="23" ref="1">
    <original>L</original>
    <variation>V</variation>
    <location>
        <position position="29"/>
    </location>
</feature>
<feature type="sequence conflict" description="In Ref. 1; AAB19791." evidence="23" ref="1">
    <original>A</original>
    <variation>D</variation>
    <location>
        <position position="200"/>
    </location>
</feature>
<feature type="sequence conflict" description="In Ref. 1; AAB19791." evidence="23" ref="1">
    <original>QGKP</original>
    <variation>ERKA</variation>
    <location>
        <begin position="279"/>
        <end position="282"/>
    </location>
</feature>
<dbReference type="EC" id="2.4.1.17" evidence="3 5 6 11 12 14"/>
<dbReference type="EMBL" id="S55985">
    <property type="protein sequence ID" value="AAB19791.2"/>
    <property type="status" value="ALT_FRAME"/>
    <property type="molecule type" value="mRNA"/>
</dbReference>
<dbReference type="EMBL" id="AF056188">
    <property type="protein sequence ID" value="AAC31425.1"/>
    <property type="molecule type" value="mRNA"/>
</dbReference>
<dbReference type="EMBL" id="AF297093">
    <property type="protein sequence ID" value="AAG30418.1"/>
    <property type="molecule type" value="Genomic_DNA"/>
</dbReference>
<dbReference type="EMBL" id="AC006985">
    <property type="status" value="NOT_ANNOTATED_CDS"/>
    <property type="molecule type" value="Genomic_DNA"/>
</dbReference>
<dbReference type="EMBL" id="AC019072">
    <property type="status" value="NOT_ANNOTATED_CDS"/>
    <property type="molecule type" value="Genomic_DNA"/>
</dbReference>
<dbReference type="EMBL" id="BC058844">
    <property type="protein sequence ID" value="AAH58844.1"/>
    <property type="molecule type" value="mRNA"/>
</dbReference>
<dbReference type="EMBL" id="AF297091">
    <property type="protein sequence ID" value="AAG29816.1"/>
    <property type="molecule type" value="Genomic_DNA"/>
</dbReference>
<dbReference type="EMBL" id="DQ364246">
    <property type="protein sequence ID" value="ABC96770.1"/>
    <property type="molecule type" value="mRNA"/>
</dbReference>
<dbReference type="CCDS" id="CCDS2505.1">
    <molecule id="O60656-1"/>
</dbReference>
<dbReference type="PIR" id="S17512">
    <property type="entry name" value="S17512"/>
</dbReference>
<dbReference type="RefSeq" id="NP_066307.1">
    <molecule id="O60656-1"/>
    <property type="nucleotide sequence ID" value="NM_021027.3"/>
</dbReference>
<dbReference type="SMR" id="O60656"/>
<dbReference type="BioGRID" id="120073">
    <property type="interactions" value="15"/>
</dbReference>
<dbReference type="ComplexPortal" id="CPX-8543">
    <molecule id="O60656-1"/>
    <property type="entry name" value="UDP-glucuronosyltransferase 1A9 complex, UGT1A9-1 variant"/>
</dbReference>
<dbReference type="ComplexPortal" id="CPX-8552">
    <molecule id="O60656-1"/>
    <property type="entry name" value="UDP-glucuronosyltransferase 1A1 complex, UGT1A1-1-UTG1A9-1 variant"/>
</dbReference>
<dbReference type="ComplexPortal" id="CPX-8560">
    <molecule id="O60656-1"/>
    <property type="entry name" value="UDP-glucuronosyltransferase 1A1 complex, UGT1A1-2-UTG1A9-1 variant"/>
</dbReference>
<dbReference type="ComplexPortal" id="CPX-8562">
    <molecule id="O60656-1"/>
    <property type="entry name" value="UDP-glucuronosyltransferase 1A1 complex, UGT1A9-UTG2B7 variant"/>
</dbReference>
<dbReference type="FunCoup" id="O60656">
    <property type="interactions" value="412"/>
</dbReference>
<dbReference type="IntAct" id="O60656">
    <property type="interactions" value="16"/>
</dbReference>
<dbReference type="STRING" id="9606.ENSP00000346768"/>
<dbReference type="BindingDB" id="O60656"/>
<dbReference type="ChEMBL" id="CHEMBL1743319"/>
<dbReference type="DrugBank" id="DB00316">
    <property type="generic name" value="Acetaminophen"/>
</dbReference>
<dbReference type="DrugBank" id="DB06403">
    <property type="generic name" value="Ambrisentan"/>
</dbReference>
<dbReference type="DrugBank" id="DB00714">
    <property type="generic name" value="Apomorphine"/>
</dbReference>
<dbReference type="DrugBank" id="DB11638">
    <property type="generic name" value="Artenimol"/>
</dbReference>
<dbReference type="DrugBank" id="DB09274">
    <property type="generic name" value="Artesunate"/>
</dbReference>
<dbReference type="DrugBank" id="DB05016">
    <property type="generic name" value="Ataluren"/>
</dbReference>
<dbReference type="DrugBank" id="DB16703">
    <property type="generic name" value="Belumosudil"/>
</dbReference>
<dbReference type="DrugBank" id="DB12236">
    <property type="generic name" value="Bexagliflozin"/>
</dbReference>
<dbReference type="DrugBank" id="DB11751">
    <property type="generic name" value="Cabotegravir"/>
</dbReference>
<dbReference type="DrugBank" id="DB08907">
    <property type="generic name" value="Canagliflozin"/>
</dbReference>
<dbReference type="DrugBank" id="DB09061">
    <property type="generic name" value="Cannabidiol"/>
</dbReference>
<dbReference type="DrugBank" id="DB14737">
    <property type="generic name" value="Cannabinol"/>
</dbReference>
<dbReference type="DrugBank" id="DB14635">
    <property type="generic name" value="Curcumin sulfate"/>
</dbReference>
<dbReference type="DrugBank" id="DB06695">
    <property type="generic name" value="Dabigatran etexilate"/>
</dbReference>
<dbReference type="DrugBank" id="DB06292">
    <property type="generic name" value="Dapagliflozin"/>
</dbReference>
<dbReference type="DrugBank" id="DB12941">
    <property type="generic name" value="Darolutamide"/>
</dbReference>
<dbReference type="DrugBank" id="DB01609">
    <property type="generic name" value="Deferasirox"/>
</dbReference>
<dbReference type="DrugBank" id="DB16650">
    <property type="generic name" value="Deucravacitinib"/>
</dbReference>
<dbReference type="DrugBank" id="DB09213">
    <property type="generic name" value="Dexibuprofen"/>
</dbReference>
<dbReference type="DrugBank" id="DB00586">
    <property type="generic name" value="Diclofenac"/>
</dbReference>
<dbReference type="DrugBank" id="DB00861">
    <property type="generic name" value="Diflunisal"/>
</dbReference>
<dbReference type="DrugBank" id="DB08930">
    <property type="generic name" value="Dolutegravir"/>
</dbReference>
<dbReference type="DrugBank" id="DB00470">
    <property type="generic name" value="Dronabinol"/>
</dbReference>
<dbReference type="DrugBank" id="DB12243">
    <property type="generic name" value="Edaravone"/>
</dbReference>
<dbReference type="DrugBank" id="DB11979">
    <property type="generic name" value="Elagolix"/>
</dbReference>
<dbReference type="DrugBank" id="DB06210">
    <property type="generic name" value="Eltrombopag"/>
</dbReference>
<dbReference type="DrugBank" id="DB09038">
    <property type="generic name" value="Empagliflozin"/>
</dbReference>
<dbReference type="DrugBank" id="DB13874">
    <property type="generic name" value="Enasidenib"/>
</dbReference>
<dbReference type="DrugBank" id="DB00494">
    <property type="generic name" value="Entacapone"/>
</dbReference>
<dbReference type="DrugBank" id="DB11827">
    <property type="generic name" value="Ertugliflozin"/>
</dbReference>
<dbReference type="DrugBank" id="DB00783">
    <property type="generic name" value="Estradiol"/>
</dbReference>
<dbReference type="DrugBank" id="DB00977">
    <property type="generic name" value="Ethinylestradiol"/>
</dbReference>
<dbReference type="DrugBank" id="DB00749">
    <property type="generic name" value="Etodolac"/>
</dbReference>
<dbReference type="DrugBank" id="DB04953">
    <property type="generic name" value="Ezogabine"/>
</dbReference>
<dbReference type="DrugBank" id="DB04854">
    <property type="generic name" value="Febuxostat"/>
</dbReference>
<dbReference type="DrugBank" id="DB01039">
    <property type="generic name" value="Fenofibrate"/>
</dbReference>
<dbReference type="DrugBank" id="DB00712">
    <property type="generic name" value="Flurbiprofen"/>
</dbReference>
<dbReference type="DrugBank" id="DB00983">
    <property type="generic name" value="Formoterol"/>
</dbReference>
<dbReference type="DrugBank" id="DB01320">
    <property type="generic name" value="Fosphenytoin"/>
</dbReference>
<dbReference type="DrugBank" id="DB12010">
    <property type="generic name" value="Fostamatinib"/>
</dbReference>
<dbReference type="DrugBank" id="DB11796">
    <property type="generic name" value="Fostemsavir"/>
</dbReference>
<dbReference type="DrugBank" id="DB06741">
    <property type="generic name" value="Gavestinel"/>
</dbReference>
<dbReference type="DrugBank" id="DB01241">
    <property type="generic name" value="Gemfibrozil"/>
</dbReference>
<dbReference type="DrugBank" id="DB11978">
    <property type="generic name" value="Glasdegib"/>
</dbReference>
<dbReference type="DrugBank" id="DB00502">
    <property type="generic name" value="Haloperidol"/>
</dbReference>
<dbReference type="DrugBank" id="DB12471">
    <property type="generic name" value="Ibrexafungerp"/>
</dbReference>
<dbReference type="DrugBank" id="DB01050">
    <property type="generic name" value="Ibuprofen"/>
</dbReference>
<dbReference type="DrugBank" id="DB00328">
    <property type="generic name" value="Indomethacin"/>
</dbReference>
<dbReference type="DrugBank" id="DB00762">
    <property type="generic name" value="Irinotecan"/>
</dbReference>
<dbReference type="DrugBank" id="DB11633">
    <property type="generic name" value="Isavuconazole"/>
</dbReference>
<dbReference type="DrugBank" id="DB06738">
    <property type="generic name" value="Ketobemidone"/>
</dbReference>
<dbReference type="DrugBank" id="DB00598">
    <property type="generic name" value="Labetalol"/>
</dbReference>
<dbReference type="DrugBank" id="DB00555">
    <property type="generic name" value="Lamotrigine"/>
</dbReference>
<dbReference type="DrugBank" id="DB01283">
    <property type="generic name" value="Lumiracoxib"/>
</dbReference>
<dbReference type="DrugBank" id="DB14009">
    <property type="generic name" value="Medical Cannabis"/>
</dbReference>
<dbReference type="DrugBank" id="DB00784">
    <property type="generic name" value="Mefenamic acid"/>
</dbReference>
<dbReference type="DrugBank" id="DB09241">
    <property type="generic name" value="Methylene blue"/>
</dbReference>
<dbReference type="DrugBank" id="DB05018">
    <property type="generic name" value="Migalastat"/>
</dbReference>
<dbReference type="DrugBank" id="DB11763">
    <property type="generic name" value="Momelotinib"/>
</dbReference>
<dbReference type="DrugBank" id="DB09285">
    <property type="generic name" value="Morniflumate"/>
</dbReference>
<dbReference type="DrugBank" id="DB00688">
    <property type="generic name" value="Mycophenolate mofetil"/>
</dbReference>
<dbReference type="DrugBank" id="DB01024">
    <property type="generic name" value="Mycophenolic acid"/>
</dbReference>
<dbReference type="DrugBank" id="DB00788">
    <property type="generic name" value="Naproxen"/>
</dbReference>
<dbReference type="DrugBank" id="DB00731">
    <property type="generic name" value="Nateglinide"/>
</dbReference>
<dbReference type="DrugBank" id="DB04552">
    <property type="generic name" value="Niflumic acid"/>
</dbReference>
<dbReference type="DrugBank" id="DB00842">
    <property type="generic name" value="Oxazepam"/>
</dbReference>
<dbReference type="DrugBank" id="DB00935">
    <property type="generic name" value="Oxymetazoline"/>
</dbReference>
<dbReference type="DrugBank" id="DB04824">
    <property type="generic name" value="Phenolphthalein"/>
</dbReference>
<dbReference type="DrugBank" id="DB00252">
    <property type="generic name" value="Phenytoin"/>
</dbReference>
<dbReference type="DrugBank" id="DB00960">
    <property type="generic name" value="Pindolol"/>
</dbReference>
<dbReference type="DrugBank" id="DB17472">
    <property type="generic name" value="Pirtobrutinib"/>
</dbReference>
<dbReference type="DrugBank" id="DB00794">
    <property type="generic name" value="Primidone"/>
</dbReference>
<dbReference type="DrugBank" id="DB09288">
    <property type="generic name" value="Propacetamol"/>
</dbReference>
<dbReference type="DrugBank" id="DB00818">
    <property type="generic name" value="Propofol"/>
</dbReference>
<dbReference type="DrugBank" id="DB08896">
    <property type="generic name" value="Regorafenib"/>
</dbReference>
<dbReference type="DrugBank" id="DB12914">
    <property type="generic name" value="Resmetirom"/>
</dbReference>
<dbReference type="DrugBank" id="DB01045">
    <property type="generic name" value="Rifampin"/>
</dbReference>
<dbReference type="DrugBank" id="DB00503">
    <property type="generic name" value="Ritonavir"/>
</dbReference>
<dbReference type="DrugBank" id="DB04847">
    <property type="generic name" value="Roxadustat"/>
</dbReference>
<dbReference type="DrugBank" id="DB06739">
    <property type="generic name" value="Seratrodast"/>
</dbReference>
<dbReference type="DrugBank" id="DB00398">
    <property type="generic name" value="Sorafenib"/>
</dbReference>
<dbReference type="DrugBank" id="DB12713">
    <property type="generic name" value="Sotagliflozin"/>
</dbReference>
<dbReference type="DrugBank" id="DB06204">
    <property type="generic name" value="Tapentadol"/>
</dbReference>
<dbReference type="DrugBank" id="DB00871">
    <property type="generic name" value="Terbutaline"/>
</dbReference>
<dbReference type="DrugBank" id="DB01685">
    <property type="generic name" value="Topiroxostat"/>
</dbReference>
<dbReference type="DrugBank" id="DB06045">
    <property type="generic name" value="Trofinetide"/>
</dbReference>
<dbReference type="DrugBank" id="DB00197">
    <property type="generic name" value="Troglitazone"/>
</dbReference>
<dbReference type="DrugBank" id="DB13609">
    <property type="generic name" value="Umifenovir"/>
</dbReference>
<dbReference type="DrugBank" id="DB12255">
    <property type="generic name" value="Vadadustat"/>
</dbReference>
<dbReference type="DrugBank" id="DB06235">
    <property type="generic name" value="Vadimezan"/>
</dbReference>
<dbReference type="DrugBank" id="DB00580">
    <property type="generic name" value="Valdecoxib"/>
</dbReference>
<dbReference type="DrugBank" id="DB00313">
    <property type="generic name" value="Valproic acid"/>
</dbReference>
<dbReference type="DrugBank" id="DB15456">
    <property type="generic name" value="Vericiguat"/>
</dbReference>
<dbReference type="DrugBank" id="DB09185">
    <property type="generic name" value="Viloxazine"/>
</dbReference>
<dbReference type="DrugBank" id="DB00744">
    <property type="generic name" value="Zileuton"/>
</dbReference>
<dbReference type="DrugCentral" id="O60656"/>
<dbReference type="SwissLipids" id="SLP:000001713">
    <molecule id="O60656-1"/>
</dbReference>
<dbReference type="CAZy" id="GT1">
    <property type="family name" value="Glycosyltransferase Family 1"/>
</dbReference>
<dbReference type="GlyConnect" id="1881">
    <property type="glycosylation" value="2 N-Linked glycans (1 site)"/>
</dbReference>
<dbReference type="GlyCosmos" id="O60656">
    <property type="glycosylation" value="3 sites, 2 glycans"/>
</dbReference>
<dbReference type="GlyGen" id="O60656">
    <property type="glycosylation" value="5 sites, 4 N-linked glycans (2 sites)"/>
</dbReference>
<dbReference type="iPTMnet" id="O60656"/>
<dbReference type="PhosphoSitePlus" id="O60656"/>
<dbReference type="BioMuta" id="UGT1A9"/>
<dbReference type="jPOST" id="O60656"/>
<dbReference type="MassIVE" id="O60656"/>
<dbReference type="PaxDb" id="9606-ENSP00000346768"/>
<dbReference type="PeptideAtlas" id="O60656"/>
<dbReference type="ProteomicsDB" id="49498">
    <molecule id="O60656-1"/>
</dbReference>
<dbReference type="Antibodypedia" id="35060">
    <property type="antibodies" value="231 antibodies from 27 providers"/>
</dbReference>
<dbReference type="DNASU" id="54600"/>
<dbReference type="Ensembl" id="ENST00000354728.5">
    <molecule id="O60656-1"/>
    <property type="protein sequence ID" value="ENSP00000346768.4"/>
    <property type="gene ID" value="ENSG00000241119.2"/>
</dbReference>
<dbReference type="GeneID" id="54600"/>
<dbReference type="KEGG" id="hsa:54600"/>
<dbReference type="MANE-Select" id="ENST00000354728.5">
    <property type="protein sequence ID" value="ENSP00000346768.4"/>
    <property type="RefSeq nucleotide sequence ID" value="NM_021027.3"/>
    <property type="RefSeq protein sequence ID" value="NP_066307.1"/>
</dbReference>
<dbReference type="AGR" id="HGNC:12541"/>
<dbReference type="CTD" id="54600"/>
<dbReference type="DisGeNET" id="54600"/>
<dbReference type="GeneCards" id="UGT1A9"/>
<dbReference type="HGNC" id="HGNC:12541">
    <property type="gene designation" value="UGT1A9"/>
</dbReference>
<dbReference type="HPA" id="ENSG00000241119">
    <property type="expression patterns" value="Group enriched (kidney, liver)"/>
</dbReference>
<dbReference type="MalaCards" id="UGT1A9"/>
<dbReference type="MIM" id="191740">
    <property type="type" value="gene"/>
</dbReference>
<dbReference type="MIM" id="606434">
    <property type="type" value="gene"/>
</dbReference>
<dbReference type="neXtProt" id="NX_O60656"/>
<dbReference type="OpenTargets" id="ENSG00000241119"/>
<dbReference type="PharmGKB" id="PA419"/>
<dbReference type="VEuPathDB" id="HostDB:ENSG00000241119"/>
<dbReference type="eggNOG" id="KOG1192">
    <property type="taxonomic scope" value="Eukaryota"/>
</dbReference>
<dbReference type="GeneTree" id="ENSGT00940000163976"/>
<dbReference type="HOGENOM" id="CLU_012949_3_1_1"/>
<dbReference type="InParanoid" id="O60656"/>
<dbReference type="OMA" id="HSHTSIW"/>
<dbReference type="OrthoDB" id="5835829at2759"/>
<dbReference type="PAN-GO" id="O60656">
    <property type="GO annotations" value="4 GO annotations based on evolutionary models"/>
</dbReference>
<dbReference type="PhylomeDB" id="O60656"/>
<dbReference type="TreeFam" id="TF315472"/>
<dbReference type="BRENDA" id="2.4.1.17">
    <property type="organism ID" value="2681"/>
</dbReference>
<dbReference type="PathwayCommons" id="O60656"/>
<dbReference type="Reactome" id="R-HSA-156588">
    <property type="pathway name" value="Glucuronidation"/>
</dbReference>
<dbReference type="Reactome" id="R-HSA-1989781">
    <property type="pathway name" value="PPARA activates gene expression"/>
</dbReference>
<dbReference type="Reactome" id="R-HSA-9749641">
    <property type="pathway name" value="Aspirin ADME"/>
</dbReference>
<dbReference type="Reactome" id="R-HSA-9753281">
    <property type="pathway name" value="Paracetamol ADME"/>
</dbReference>
<dbReference type="SABIO-RK" id="O60656"/>
<dbReference type="SignaLink" id="O60656"/>
<dbReference type="SIGNOR" id="O60656"/>
<dbReference type="BioGRID-ORCS" id="54600">
    <property type="hits" value="25 hits in 1026 CRISPR screens"/>
</dbReference>
<dbReference type="GeneWiki" id="UGT1A9"/>
<dbReference type="GenomeRNAi" id="54600"/>
<dbReference type="Pharos" id="O60656">
    <property type="development level" value="Tbio"/>
</dbReference>
<dbReference type="PRO" id="PR:O60656"/>
<dbReference type="Proteomes" id="UP000005640">
    <property type="component" value="Chromosome 2"/>
</dbReference>
<dbReference type="RNAct" id="O60656">
    <property type="molecule type" value="protein"/>
</dbReference>
<dbReference type="Bgee" id="ENSG00000241119">
    <property type="expression patterns" value="Expressed in adult mammalian kidney and 32 other cell types or tissues"/>
</dbReference>
<dbReference type="ExpressionAtlas" id="O60656">
    <property type="expression patterns" value="baseline and differential"/>
</dbReference>
<dbReference type="GO" id="GO:0005783">
    <property type="term" value="C:endoplasmic reticulum"/>
    <property type="evidence" value="ECO:0000314"/>
    <property type="project" value="UniProtKB"/>
</dbReference>
<dbReference type="GO" id="GO:0005789">
    <property type="term" value="C:endoplasmic reticulum membrane"/>
    <property type="evidence" value="ECO:0000304"/>
    <property type="project" value="Reactome"/>
</dbReference>
<dbReference type="GO" id="GO:0019899">
    <property type="term" value="F:enzyme binding"/>
    <property type="evidence" value="ECO:0000353"/>
    <property type="project" value="BHF-UCL"/>
</dbReference>
<dbReference type="GO" id="GO:0004857">
    <property type="term" value="F:enzyme inhibitor activity"/>
    <property type="evidence" value="ECO:0000314"/>
    <property type="project" value="BHF-UCL"/>
</dbReference>
<dbReference type="GO" id="GO:0015020">
    <property type="term" value="F:glucuronosyltransferase activity"/>
    <property type="evidence" value="ECO:0000314"/>
    <property type="project" value="UniProtKB"/>
</dbReference>
<dbReference type="GO" id="GO:0042802">
    <property type="term" value="F:identical protein binding"/>
    <property type="evidence" value="ECO:0000353"/>
    <property type="project" value="IntAct"/>
</dbReference>
<dbReference type="GO" id="GO:0046982">
    <property type="term" value="F:protein heterodimerization activity"/>
    <property type="evidence" value="ECO:0000353"/>
    <property type="project" value="BHF-UCL"/>
</dbReference>
<dbReference type="GO" id="GO:0042803">
    <property type="term" value="F:protein homodimerization activity"/>
    <property type="evidence" value="ECO:0000314"/>
    <property type="project" value="UniProtKB"/>
</dbReference>
<dbReference type="GO" id="GO:0001972">
    <property type="term" value="F:retinoic acid binding"/>
    <property type="evidence" value="ECO:0000314"/>
    <property type="project" value="BHF-UCL"/>
</dbReference>
<dbReference type="GO" id="GO:0051552">
    <property type="term" value="P:flavone metabolic process"/>
    <property type="evidence" value="ECO:0000314"/>
    <property type="project" value="BHF-UCL"/>
</dbReference>
<dbReference type="GO" id="GO:0009812">
    <property type="term" value="P:flavonoid metabolic process"/>
    <property type="evidence" value="ECO:0000314"/>
    <property type="project" value="BHF-UCL"/>
</dbReference>
<dbReference type="GO" id="GO:0001889">
    <property type="term" value="P:liver development"/>
    <property type="evidence" value="ECO:0000318"/>
    <property type="project" value="GO_Central"/>
</dbReference>
<dbReference type="GO" id="GO:0045922">
    <property type="term" value="P:negative regulation of fatty acid metabolic process"/>
    <property type="evidence" value="ECO:0000314"/>
    <property type="project" value="BHF-UCL"/>
</dbReference>
<dbReference type="GO" id="GO:0042573">
    <property type="term" value="P:retinoic acid metabolic process"/>
    <property type="evidence" value="ECO:0000305"/>
    <property type="project" value="BHF-UCL"/>
</dbReference>
<dbReference type="GO" id="GO:0006805">
    <property type="term" value="P:xenobiotic metabolic process"/>
    <property type="evidence" value="ECO:0000314"/>
    <property type="project" value="UniProtKB"/>
</dbReference>
<dbReference type="CDD" id="cd03784">
    <property type="entry name" value="GT1_Gtf-like"/>
    <property type="match status" value="1"/>
</dbReference>
<dbReference type="FunFam" id="3.40.50.2000:FF:000001">
    <property type="entry name" value="UDP-glucuronosyltransferase"/>
    <property type="match status" value="1"/>
</dbReference>
<dbReference type="FunFam" id="3.40.50.2000:FF:000092">
    <property type="entry name" value="UDP-glucuronosyltransferase"/>
    <property type="match status" value="1"/>
</dbReference>
<dbReference type="Gene3D" id="3.40.50.2000">
    <property type="entry name" value="Glycogen Phosphorylase B"/>
    <property type="match status" value="2"/>
</dbReference>
<dbReference type="InterPro" id="IPR050271">
    <property type="entry name" value="UDP-glycosyltransferase"/>
</dbReference>
<dbReference type="InterPro" id="IPR002213">
    <property type="entry name" value="UDP_glucos_trans"/>
</dbReference>
<dbReference type="InterPro" id="IPR035595">
    <property type="entry name" value="UDP_glycos_trans_CS"/>
</dbReference>
<dbReference type="PANTHER" id="PTHR48043">
    <property type="entry name" value="EG:EG0003.4 PROTEIN-RELATED"/>
    <property type="match status" value="1"/>
</dbReference>
<dbReference type="PANTHER" id="PTHR48043:SF161">
    <property type="entry name" value="UDP GLUCURONOSYLTRANSFERASE FAMILY 1 MEMBER A1"/>
    <property type="match status" value="1"/>
</dbReference>
<dbReference type="Pfam" id="PF00201">
    <property type="entry name" value="UDPGT"/>
    <property type="match status" value="1"/>
</dbReference>
<dbReference type="SUPFAM" id="SSF53756">
    <property type="entry name" value="UDP-Glycosyltransferase/glycogen phosphorylase"/>
    <property type="match status" value="1"/>
</dbReference>
<dbReference type="PROSITE" id="PS00375">
    <property type="entry name" value="UDPGT"/>
    <property type="match status" value="1"/>
</dbReference>
<evidence type="ECO:0000250" key="1">
    <source>
        <dbReference type="UniProtKB" id="Q62452"/>
    </source>
</evidence>
<evidence type="ECO:0000255" key="2"/>
<evidence type="ECO:0000269" key="3">
    <source>
    </source>
</evidence>
<evidence type="ECO:0000269" key="4">
    <source>
    </source>
</evidence>
<evidence type="ECO:0000269" key="5">
    <source>
    </source>
</evidence>
<evidence type="ECO:0000269" key="6">
    <source>
    </source>
</evidence>
<evidence type="ECO:0000269" key="7">
    <source>
    </source>
</evidence>
<evidence type="ECO:0000269" key="8">
    <source>
    </source>
</evidence>
<evidence type="ECO:0000269" key="9">
    <source>
    </source>
</evidence>
<evidence type="ECO:0000269" key="10">
    <source>
    </source>
</evidence>
<evidence type="ECO:0000269" key="11">
    <source>
    </source>
</evidence>
<evidence type="ECO:0000269" key="12">
    <source>
    </source>
</evidence>
<evidence type="ECO:0000269" key="13">
    <source>
    </source>
</evidence>
<evidence type="ECO:0000269" key="14">
    <source>
    </source>
</evidence>
<evidence type="ECO:0000269" key="15">
    <source>
    </source>
</evidence>
<evidence type="ECO:0000269" key="16">
    <source>
    </source>
</evidence>
<evidence type="ECO:0000269" key="17">
    <source>
    </source>
</evidence>
<evidence type="ECO:0000269" key="18">
    <source>
    </source>
</evidence>
<evidence type="ECO:0000269" key="19">
    <source>
    </source>
</evidence>
<evidence type="ECO:0000303" key="20">
    <source>
    </source>
</evidence>
<evidence type="ECO:0000303" key="21">
    <source>
    </source>
</evidence>
<evidence type="ECO:0000303" key="22">
    <source>
    </source>
</evidence>
<evidence type="ECO:0000305" key="23"/>
<evidence type="ECO:0000305" key="24">
    <source>
    </source>
</evidence>
<evidence type="ECO:0000305" key="25">
    <source>
    </source>
</evidence>
<evidence type="ECO:0000305" key="26">
    <source>
    </source>
</evidence>
<evidence type="ECO:0000305" key="27">
    <source>
    </source>
</evidence>
<evidence type="ECO:0000305" key="28">
    <source>
    </source>
</evidence>
<evidence type="ECO:0000305" key="29">
    <source>
    </source>
</evidence>
<evidence type="ECO:0000305" key="30">
    <source>
    </source>
</evidence>
<evidence type="ECO:0000305" key="31">
    <source>
    </source>
</evidence>
<evidence type="ECO:0000305" key="32">
    <source>
    </source>
</evidence>
<evidence type="ECO:0000305" key="33">
    <source>
    </source>
</evidence>
<evidence type="ECO:0000305" key="34">
    <source>
    </source>
</evidence>
<evidence type="ECO:0000305" key="35">
    <source>
    </source>
</evidence>
<evidence type="ECO:0000305" key="36">
    <source>
    </source>
</evidence>
<evidence type="ECO:0000312" key="37">
    <source>
        <dbReference type="HGNC" id="HGNC:12541"/>
    </source>
</evidence>
<name>UD19_HUMAN</name>
<accession>O60656</accession>
<accession>B8K285</accession>
<accession>P36509</accession>
<accession>Q9HAX0</accession>
<sequence>MACTGWTSPLPLCVCLLLTCGFAEAGKLLVVPMDGSHWFTMRSVVEKLILRGHEVVVVMPEVSWQLGRSLNCTVKTYSTSYTLEDLDREFKAFAHAQWKAQVRSIYSLLMGSYNDIFDLFFSNCRSLFKDKKLVEYLKESSFDAVFLDPFDNCGLIVAKYFSLPSVVFARGILCHYLEEGAQCPAPLSYVPRILLGFSDAMTFKERVRNHIMHLEEHLLCHRFFKNALEIASEILQTPVTEYDLYSHTSIWLLRTDFVLDYPKPVMPNMIFIGGINCHQGKPLPMEFEAYINASGEHGIVVFSLGSMVSEIPEKKAMAIADALGKIPQTVLWRYTGTRPSNLANNTILVKWLPQNDLLGHPMTRAFITHAGSHGVYESICNGVPMVMMPLFGDQMDNAKRMETKGAGVTLNVLEMTSEDLENALKAVINDKSYKENIMRLSSLHKDRPVEPLDLAVFWVEFVMRHKGAPHLRPAAHDLTWYQYHSLDVIGFLLAVVLTVAFITFKCCAYGYRKCLGKKGRVKKAHKSKTH</sequence>
<proteinExistence type="evidence at protein level"/>
<gene>
    <name evidence="37" type="primary">UGT1A9</name>
    <name type="synonym">GNT1</name>
    <name type="synonym">UGT1</name>
</gene>
<keyword id="KW-0025">Alternative splicing</keyword>
<keyword id="KW-0256">Endoplasmic reticulum</keyword>
<keyword id="KW-0325">Glycoprotein</keyword>
<keyword id="KW-0328">Glycosyltransferase</keyword>
<keyword id="KW-0443">Lipid metabolism</keyword>
<keyword id="KW-0472">Membrane</keyword>
<keyword id="KW-1267">Proteomics identification</keyword>
<keyword id="KW-1185">Reference proteome</keyword>
<keyword id="KW-0732">Signal</keyword>
<keyword id="KW-0808">Transferase</keyword>
<keyword id="KW-0812">Transmembrane</keyword>
<keyword id="KW-1133">Transmembrane helix</keyword>